<dbReference type="EC" id="2.7.2.3" evidence="1"/>
<dbReference type="EMBL" id="CP000413">
    <property type="protein sequence ID" value="ABJ60670.1"/>
    <property type="molecule type" value="Genomic_DNA"/>
</dbReference>
<dbReference type="RefSeq" id="WP_003647013.1">
    <property type="nucleotide sequence ID" value="NZ_WBMG01000002.1"/>
</dbReference>
<dbReference type="SMR" id="Q042F2"/>
<dbReference type="KEGG" id="lga:LGAS_1307"/>
<dbReference type="HOGENOM" id="CLU_025427_0_2_9"/>
<dbReference type="BioCyc" id="LGAS324831:G1G6Y-1302-MONOMER"/>
<dbReference type="UniPathway" id="UPA00109">
    <property type="reaction ID" value="UER00185"/>
</dbReference>
<dbReference type="Proteomes" id="UP000000664">
    <property type="component" value="Chromosome"/>
</dbReference>
<dbReference type="GO" id="GO:0005829">
    <property type="term" value="C:cytosol"/>
    <property type="evidence" value="ECO:0007669"/>
    <property type="project" value="TreeGrafter"/>
</dbReference>
<dbReference type="GO" id="GO:0043531">
    <property type="term" value="F:ADP binding"/>
    <property type="evidence" value="ECO:0007669"/>
    <property type="project" value="TreeGrafter"/>
</dbReference>
<dbReference type="GO" id="GO:0005524">
    <property type="term" value="F:ATP binding"/>
    <property type="evidence" value="ECO:0007669"/>
    <property type="project" value="UniProtKB-KW"/>
</dbReference>
<dbReference type="GO" id="GO:0004618">
    <property type="term" value="F:phosphoglycerate kinase activity"/>
    <property type="evidence" value="ECO:0007669"/>
    <property type="project" value="UniProtKB-UniRule"/>
</dbReference>
<dbReference type="GO" id="GO:0006094">
    <property type="term" value="P:gluconeogenesis"/>
    <property type="evidence" value="ECO:0007669"/>
    <property type="project" value="TreeGrafter"/>
</dbReference>
<dbReference type="GO" id="GO:0006096">
    <property type="term" value="P:glycolytic process"/>
    <property type="evidence" value="ECO:0007669"/>
    <property type="project" value="UniProtKB-UniRule"/>
</dbReference>
<dbReference type="CDD" id="cd00318">
    <property type="entry name" value="Phosphoglycerate_kinase"/>
    <property type="match status" value="1"/>
</dbReference>
<dbReference type="FunFam" id="3.40.50.1260:FF:000001">
    <property type="entry name" value="Phosphoglycerate kinase"/>
    <property type="match status" value="1"/>
</dbReference>
<dbReference type="FunFam" id="3.40.50.1260:FF:000008">
    <property type="entry name" value="Phosphoglycerate kinase"/>
    <property type="match status" value="1"/>
</dbReference>
<dbReference type="Gene3D" id="3.40.50.1260">
    <property type="entry name" value="Phosphoglycerate kinase, N-terminal domain"/>
    <property type="match status" value="2"/>
</dbReference>
<dbReference type="HAMAP" id="MF_00145">
    <property type="entry name" value="Phosphoglyc_kinase"/>
    <property type="match status" value="1"/>
</dbReference>
<dbReference type="InterPro" id="IPR001576">
    <property type="entry name" value="Phosphoglycerate_kinase"/>
</dbReference>
<dbReference type="InterPro" id="IPR015911">
    <property type="entry name" value="Phosphoglycerate_kinase_CS"/>
</dbReference>
<dbReference type="InterPro" id="IPR015824">
    <property type="entry name" value="Phosphoglycerate_kinase_N"/>
</dbReference>
<dbReference type="InterPro" id="IPR036043">
    <property type="entry name" value="Phosphoglycerate_kinase_sf"/>
</dbReference>
<dbReference type="PANTHER" id="PTHR11406">
    <property type="entry name" value="PHOSPHOGLYCERATE KINASE"/>
    <property type="match status" value="1"/>
</dbReference>
<dbReference type="PANTHER" id="PTHR11406:SF23">
    <property type="entry name" value="PHOSPHOGLYCERATE KINASE 1, CHLOROPLASTIC-RELATED"/>
    <property type="match status" value="1"/>
</dbReference>
<dbReference type="Pfam" id="PF00162">
    <property type="entry name" value="PGK"/>
    <property type="match status" value="1"/>
</dbReference>
<dbReference type="PIRSF" id="PIRSF000724">
    <property type="entry name" value="Pgk"/>
    <property type="match status" value="1"/>
</dbReference>
<dbReference type="PRINTS" id="PR00477">
    <property type="entry name" value="PHGLYCKINASE"/>
</dbReference>
<dbReference type="SUPFAM" id="SSF53748">
    <property type="entry name" value="Phosphoglycerate kinase"/>
    <property type="match status" value="1"/>
</dbReference>
<dbReference type="PROSITE" id="PS00111">
    <property type="entry name" value="PGLYCERATE_KINASE"/>
    <property type="match status" value="1"/>
</dbReference>
<reference key="1">
    <citation type="journal article" date="2006" name="Proc. Natl. Acad. Sci. U.S.A.">
        <title>Comparative genomics of the lactic acid bacteria.</title>
        <authorList>
            <person name="Makarova K.S."/>
            <person name="Slesarev A."/>
            <person name="Wolf Y.I."/>
            <person name="Sorokin A."/>
            <person name="Mirkin B."/>
            <person name="Koonin E.V."/>
            <person name="Pavlov A."/>
            <person name="Pavlova N."/>
            <person name="Karamychev V."/>
            <person name="Polouchine N."/>
            <person name="Shakhova V."/>
            <person name="Grigoriev I."/>
            <person name="Lou Y."/>
            <person name="Rohksar D."/>
            <person name="Lucas S."/>
            <person name="Huang K."/>
            <person name="Goodstein D.M."/>
            <person name="Hawkins T."/>
            <person name="Plengvidhya V."/>
            <person name="Welker D."/>
            <person name="Hughes J."/>
            <person name="Goh Y."/>
            <person name="Benson A."/>
            <person name="Baldwin K."/>
            <person name="Lee J.-H."/>
            <person name="Diaz-Muniz I."/>
            <person name="Dosti B."/>
            <person name="Smeianov V."/>
            <person name="Wechter W."/>
            <person name="Barabote R."/>
            <person name="Lorca G."/>
            <person name="Altermann E."/>
            <person name="Barrangou R."/>
            <person name="Ganesan B."/>
            <person name="Xie Y."/>
            <person name="Rawsthorne H."/>
            <person name="Tamir D."/>
            <person name="Parker C."/>
            <person name="Breidt F."/>
            <person name="Broadbent J.R."/>
            <person name="Hutkins R."/>
            <person name="O'Sullivan D."/>
            <person name="Steele J."/>
            <person name="Unlu G."/>
            <person name="Saier M.H. Jr."/>
            <person name="Klaenhammer T."/>
            <person name="Richardson P."/>
            <person name="Kozyavkin S."/>
            <person name="Weimer B.C."/>
            <person name="Mills D.A."/>
        </authorList>
    </citation>
    <scope>NUCLEOTIDE SEQUENCE [LARGE SCALE GENOMIC DNA]</scope>
    <source>
        <strain>ATCC 33323 / DSM 20243 / BCRC 14619 / CIP 102991 / JCM 1131 / KCTC 3163 / NCIMB 11718 / NCTC 13722 / AM63</strain>
    </source>
</reference>
<gene>
    <name evidence="1" type="primary">pgk</name>
    <name type="ordered locus">LGAS_1307</name>
</gene>
<keyword id="KW-0067">ATP-binding</keyword>
<keyword id="KW-0963">Cytoplasm</keyword>
<keyword id="KW-0324">Glycolysis</keyword>
<keyword id="KW-0418">Kinase</keyword>
<keyword id="KW-0547">Nucleotide-binding</keyword>
<keyword id="KW-0808">Transferase</keyword>
<sequence length="403" mass="43043">MAKLIVSDLDLKGKKVLVRVDFNVPIKNGVIGDDNRIVAALPTIKYIIEHGGKAILLSHLGRVKSDADKKELSLRPVAERLSELLKKPVTFVPENEGKEVEETIDKMKDGDVIVLENTRFQDIDNDFGKRESKNDPKLGEYWASLGDVFVNDAFGTAHRSHASNVGIATAMKKAGKPAAAGFLLEKEIKFLGDAVENPVHPFVTILGGAKVSDKIGVIENLIPKSDHILIGGGMAYTFLAAQGHKIGKSLFEADKVELAKELLAKAGDKIVLPVDNVAATEFSNDAPHEVVGDDIPDNEMGLDIGPKTVEKFRDILKDAKTVVWNGPMGAFEMPNYAEGTLEVGRALADLKDAVTIIGGGDSTAAAKQLGIAPKISHISTGGGASLNYLEGKELPGIACVSDK</sequence>
<proteinExistence type="inferred from homology"/>
<evidence type="ECO:0000255" key="1">
    <source>
        <dbReference type="HAMAP-Rule" id="MF_00145"/>
    </source>
</evidence>
<comment type="catalytic activity">
    <reaction evidence="1">
        <text>(2R)-3-phosphoglycerate + ATP = (2R)-3-phospho-glyceroyl phosphate + ADP</text>
        <dbReference type="Rhea" id="RHEA:14801"/>
        <dbReference type="ChEBI" id="CHEBI:30616"/>
        <dbReference type="ChEBI" id="CHEBI:57604"/>
        <dbReference type="ChEBI" id="CHEBI:58272"/>
        <dbReference type="ChEBI" id="CHEBI:456216"/>
        <dbReference type="EC" id="2.7.2.3"/>
    </reaction>
</comment>
<comment type="pathway">
    <text evidence="1">Carbohydrate degradation; glycolysis; pyruvate from D-glyceraldehyde 3-phosphate: step 2/5.</text>
</comment>
<comment type="subunit">
    <text evidence="1">Monomer.</text>
</comment>
<comment type="subcellular location">
    <subcellularLocation>
        <location evidence="1">Cytoplasm</location>
    </subcellularLocation>
</comment>
<comment type="similarity">
    <text evidence="1">Belongs to the phosphoglycerate kinase family.</text>
</comment>
<name>PGK_LACGA</name>
<feature type="chain" id="PRO_1000009622" description="Phosphoglycerate kinase">
    <location>
        <begin position="1"/>
        <end position="403"/>
    </location>
</feature>
<feature type="binding site" evidence="1">
    <location>
        <begin position="21"/>
        <end position="23"/>
    </location>
    <ligand>
        <name>substrate</name>
    </ligand>
</feature>
<feature type="binding site" evidence="1">
    <location>
        <position position="36"/>
    </location>
    <ligand>
        <name>substrate</name>
    </ligand>
</feature>
<feature type="binding site" evidence="1">
    <location>
        <begin position="59"/>
        <end position="62"/>
    </location>
    <ligand>
        <name>substrate</name>
    </ligand>
</feature>
<feature type="binding site" evidence="1">
    <location>
        <position position="119"/>
    </location>
    <ligand>
        <name>substrate</name>
    </ligand>
</feature>
<feature type="binding site" evidence="1">
    <location>
        <position position="159"/>
    </location>
    <ligand>
        <name>substrate</name>
    </ligand>
</feature>
<feature type="binding site" evidence="1">
    <location>
        <position position="214"/>
    </location>
    <ligand>
        <name>ATP</name>
        <dbReference type="ChEBI" id="CHEBI:30616"/>
    </ligand>
</feature>
<feature type="binding site" evidence="1">
    <location>
        <position position="301"/>
    </location>
    <ligand>
        <name>ATP</name>
        <dbReference type="ChEBI" id="CHEBI:30616"/>
    </ligand>
</feature>
<feature type="binding site" evidence="1">
    <location>
        <position position="332"/>
    </location>
    <ligand>
        <name>ATP</name>
        <dbReference type="ChEBI" id="CHEBI:30616"/>
    </ligand>
</feature>
<feature type="binding site" evidence="1">
    <location>
        <begin position="359"/>
        <end position="362"/>
    </location>
    <ligand>
        <name>ATP</name>
        <dbReference type="ChEBI" id="CHEBI:30616"/>
    </ligand>
</feature>
<protein>
    <recommendedName>
        <fullName evidence="1">Phosphoglycerate kinase</fullName>
        <ecNumber evidence="1">2.7.2.3</ecNumber>
    </recommendedName>
</protein>
<accession>Q042F2</accession>
<organism>
    <name type="scientific">Lactobacillus gasseri (strain ATCC 33323 / DSM 20243 / BCRC 14619 / CIP 102991 / JCM 1131 / KCTC 3163 / NCIMB 11718 / NCTC 13722 / AM63)</name>
    <dbReference type="NCBI Taxonomy" id="324831"/>
    <lineage>
        <taxon>Bacteria</taxon>
        <taxon>Bacillati</taxon>
        <taxon>Bacillota</taxon>
        <taxon>Bacilli</taxon>
        <taxon>Lactobacillales</taxon>
        <taxon>Lactobacillaceae</taxon>
        <taxon>Lactobacillus</taxon>
    </lineage>
</organism>